<name>FOLD2_STRAW</name>
<organism>
    <name type="scientific">Streptomyces avermitilis (strain ATCC 31267 / DSM 46492 / JCM 5070 / NBRC 14893 / NCIMB 12804 / NRRL 8165 / MA-4680)</name>
    <dbReference type="NCBI Taxonomy" id="227882"/>
    <lineage>
        <taxon>Bacteria</taxon>
        <taxon>Bacillati</taxon>
        <taxon>Actinomycetota</taxon>
        <taxon>Actinomycetes</taxon>
        <taxon>Kitasatosporales</taxon>
        <taxon>Streptomycetaceae</taxon>
        <taxon>Streptomyces</taxon>
    </lineage>
</organism>
<reference key="1">
    <citation type="journal article" date="2001" name="Proc. Natl. Acad. Sci. U.S.A.">
        <title>Genome sequence of an industrial microorganism Streptomyces avermitilis: deducing the ability of producing secondary metabolites.</title>
        <authorList>
            <person name="Omura S."/>
            <person name="Ikeda H."/>
            <person name="Ishikawa J."/>
            <person name="Hanamoto A."/>
            <person name="Takahashi C."/>
            <person name="Shinose M."/>
            <person name="Takahashi Y."/>
            <person name="Horikawa H."/>
            <person name="Nakazawa H."/>
            <person name="Osonoe T."/>
            <person name="Kikuchi H."/>
            <person name="Shiba T."/>
            <person name="Sakaki Y."/>
            <person name="Hattori M."/>
        </authorList>
    </citation>
    <scope>NUCLEOTIDE SEQUENCE [LARGE SCALE GENOMIC DNA]</scope>
    <source>
        <strain>ATCC 31267 / DSM 46492 / JCM 5070 / NBRC 14893 / NCIMB 12804 / NRRL 8165 / MA-4680</strain>
    </source>
</reference>
<reference key="2">
    <citation type="journal article" date="2003" name="Nat. Biotechnol.">
        <title>Complete genome sequence and comparative analysis of the industrial microorganism Streptomyces avermitilis.</title>
        <authorList>
            <person name="Ikeda H."/>
            <person name="Ishikawa J."/>
            <person name="Hanamoto A."/>
            <person name="Shinose M."/>
            <person name="Kikuchi H."/>
            <person name="Shiba T."/>
            <person name="Sakaki Y."/>
            <person name="Hattori M."/>
            <person name="Omura S."/>
        </authorList>
    </citation>
    <scope>NUCLEOTIDE SEQUENCE [LARGE SCALE GENOMIC DNA]</scope>
    <source>
        <strain>ATCC 31267 / DSM 46492 / JCM 5070 / NBRC 14893 / NCIMB 12804 / NRRL 8165 / MA-4680</strain>
    </source>
</reference>
<keyword id="KW-0028">Amino-acid biosynthesis</keyword>
<keyword id="KW-0368">Histidine biosynthesis</keyword>
<keyword id="KW-0378">Hydrolase</keyword>
<keyword id="KW-0486">Methionine biosynthesis</keyword>
<keyword id="KW-0511">Multifunctional enzyme</keyword>
<keyword id="KW-0521">NADP</keyword>
<keyword id="KW-0554">One-carbon metabolism</keyword>
<keyword id="KW-0560">Oxidoreductase</keyword>
<keyword id="KW-0658">Purine biosynthesis</keyword>
<keyword id="KW-1185">Reference proteome</keyword>
<accession>Q82HR6</accession>
<proteinExistence type="inferred from homology"/>
<dbReference type="EC" id="1.5.1.5" evidence="1"/>
<dbReference type="EC" id="3.5.4.9" evidence="1"/>
<dbReference type="EMBL" id="BA000030">
    <property type="protein sequence ID" value="BAC71154.1"/>
    <property type="molecule type" value="Genomic_DNA"/>
</dbReference>
<dbReference type="RefSeq" id="WP_010984873.1">
    <property type="nucleotide sequence ID" value="NZ_JZJK01000090.1"/>
</dbReference>
<dbReference type="SMR" id="Q82HR6"/>
<dbReference type="GeneID" id="41540511"/>
<dbReference type="KEGG" id="sma:SAVERM_3442"/>
<dbReference type="eggNOG" id="COG0190">
    <property type="taxonomic scope" value="Bacteria"/>
</dbReference>
<dbReference type="HOGENOM" id="CLU_034045_3_0_11"/>
<dbReference type="OrthoDB" id="9803580at2"/>
<dbReference type="UniPathway" id="UPA00193"/>
<dbReference type="Proteomes" id="UP000000428">
    <property type="component" value="Chromosome"/>
</dbReference>
<dbReference type="GO" id="GO:0005829">
    <property type="term" value="C:cytosol"/>
    <property type="evidence" value="ECO:0007669"/>
    <property type="project" value="TreeGrafter"/>
</dbReference>
<dbReference type="GO" id="GO:0004477">
    <property type="term" value="F:methenyltetrahydrofolate cyclohydrolase activity"/>
    <property type="evidence" value="ECO:0007669"/>
    <property type="project" value="UniProtKB-UniRule"/>
</dbReference>
<dbReference type="GO" id="GO:0004488">
    <property type="term" value="F:methylenetetrahydrofolate dehydrogenase (NADP+) activity"/>
    <property type="evidence" value="ECO:0007669"/>
    <property type="project" value="UniProtKB-UniRule"/>
</dbReference>
<dbReference type="GO" id="GO:0000105">
    <property type="term" value="P:L-histidine biosynthetic process"/>
    <property type="evidence" value="ECO:0007669"/>
    <property type="project" value="UniProtKB-KW"/>
</dbReference>
<dbReference type="GO" id="GO:0009086">
    <property type="term" value="P:methionine biosynthetic process"/>
    <property type="evidence" value="ECO:0007669"/>
    <property type="project" value="UniProtKB-KW"/>
</dbReference>
<dbReference type="GO" id="GO:0006164">
    <property type="term" value="P:purine nucleotide biosynthetic process"/>
    <property type="evidence" value="ECO:0007669"/>
    <property type="project" value="UniProtKB-KW"/>
</dbReference>
<dbReference type="GO" id="GO:0035999">
    <property type="term" value="P:tetrahydrofolate interconversion"/>
    <property type="evidence" value="ECO:0007669"/>
    <property type="project" value="UniProtKB-UniRule"/>
</dbReference>
<dbReference type="CDD" id="cd01080">
    <property type="entry name" value="NAD_bind_m-THF_DH_Cyclohyd"/>
    <property type="match status" value="1"/>
</dbReference>
<dbReference type="FunFam" id="3.40.50.10860:FF:000001">
    <property type="entry name" value="Bifunctional protein FolD"/>
    <property type="match status" value="1"/>
</dbReference>
<dbReference type="FunFam" id="3.40.50.720:FF:000094">
    <property type="entry name" value="Bifunctional protein FolD"/>
    <property type="match status" value="1"/>
</dbReference>
<dbReference type="Gene3D" id="3.40.50.10860">
    <property type="entry name" value="Leucine Dehydrogenase, chain A, domain 1"/>
    <property type="match status" value="1"/>
</dbReference>
<dbReference type="Gene3D" id="3.40.50.720">
    <property type="entry name" value="NAD(P)-binding Rossmann-like Domain"/>
    <property type="match status" value="1"/>
</dbReference>
<dbReference type="HAMAP" id="MF_01576">
    <property type="entry name" value="THF_DHG_CYH"/>
    <property type="match status" value="1"/>
</dbReference>
<dbReference type="InterPro" id="IPR046346">
    <property type="entry name" value="Aminoacid_DH-like_N_sf"/>
</dbReference>
<dbReference type="InterPro" id="IPR036291">
    <property type="entry name" value="NAD(P)-bd_dom_sf"/>
</dbReference>
<dbReference type="InterPro" id="IPR000672">
    <property type="entry name" value="THF_DH/CycHdrlase"/>
</dbReference>
<dbReference type="InterPro" id="IPR020630">
    <property type="entry name" value="THF_DH/CycHdrlase_cat_dom"/>
</dbReference>
<dbReference type="InterPro" id="IPR020631">
    <property type="entry name" value="THF_DH/CycHdrlase_NAD-bd_dom"/>
</dbReference>
<dbReference type="NCBIfam" id="NF010789">
    <property type="entry name" value="PRK14193.1"/>
    <property type="match status" value="1"/>
</dbReference>
<dbReference type="PANTHER" id="PTHR48099:SF5">
    <property type="entry name" value="C-1-TETRAHYDROFOLATE SYNTHASE, CYTOPLASMIC"/>
    <property type="match status" value="1"/>
</dbReference>
<dbReference type="PANTHER" id="PTHR48099">
    <property type="entry name" value="C-1-TETRAHYDROFOLATE SYNTHASE, CYTOPLASMIC-RELATED"/>
    <property type="match status" value="1"/>
</dbReference>
<dbReference type="Pfam" id="PF00763">
    <property type="entry name" value="THF_DHG_CYH"/>
    <property type="match status" value="1"/>
</dbReference>
<dbReference type="Pfam" id="PF02882">
    <property type="entry name" value="THF_DHG_CYH_C"/>
    <property type="match status" value="1"/>
</dbReference>
<dbReference type="PRINTS" id="PR00085">
    <property type="entry name" value="THFDHDRGNASE"/>
</dbReference>
<dbReference type="SUPFAM" id="SSF53223">
    <property type="entry name" value="Aminoacid dehydrogenase-like, N-terminal domain"/>
    <property type="match status" value="1"/>
</dbReference>
<dbReference type="SUPFAM" id="SSF51735">
    <property type="entry name" value="NAD(P)-binding Rossmann-fold domains"/>
    <property type="match status" value="1"/>
</dbReference>
<gene>
    <name evidence="1" type="primary">folD2</name>
    <name type="ordered locus">SAV_3442</name>
</gene>
<evidence type="ECO:0000255" key="1">
    <source>
        <dbReference type="HAMAP-Rule" id="MF_01576"/>
    </source>
</evidence>
<comment type="function">
    <text evidence="1">Catalyzes the oxidation of 5,10-methylenetetrahydrofolate to 5,10-methenyltetrahydrofolate and then the hydrolysis of 5,10-methenyltetrahydrofolate to 10-formyltetrahydrofolate.</text>
</comment>
<comment type="catalytic activity">
    <reaction evidence="1">
        <text>(6R)-5,10-methylene-5,6,7,8-tetrahydrofolate + NADP(+) = (6R)-5,10-methenyltetrahydrofolate + NADPH</text>
        <dbReference type="Rhea" id="RHEA:22812"/>
        <dbReference type="ChEBI" id="CHEBI:15636"/>
        <dbReference type="ChEBI" id="CHEBI:57455"/>
        <dbReference type="ChEBI" id="CHEBI:57783"/>
        <dbReference type="ChEBI" id="CHEBI:58349"/>
        <dbReference type="EC" id="1.5.1.5"/>
    </reaction>
</comment>
<comment type="catalytic activity">
    <reaction evidence="1">
        <text>(6R)-5,10-methenyltetrahydrofolate + H2O = (6R)-10-formyltetrahydrofolate + H(+)</text>
        <dbReference type="Rhea" id="RHEA:23700"/>
        <dbReference type="ChEBI" id="CHEBI:15377"/>
        <dbReference type="ChEBI" id="CHEBI:15378"/>
        <dbReference type="ChEBI" id="CHEBI:57455"/>
        <dbReference type="ChEBI" id="CHEBI:195366"/>
        <dbReference type="EC" id="3.5.4.9"/>
    </reaction>
</comment>
<comment type="pathway">
    <text evidence="1">One-carbon metabolism; tetrahydrofolate interconversion.</text>
</comment>
<comment type="subunit">
    <text evidence="1">Homodimer.</text>
</comment>
<comment type="similarity">
    <text evidence="1">Belongs to the tetrahydrofolate dehydrogenase/cyclohydrolase family.</text>
</comment>
<protein>
    <recommendedName>
        <fullName evidence="1">Bifunctional protein FolD 2</fullName>
    </recommendedName>
    <domain>
        <recommendedName>
            <fullName evidence="1">Methylenetetrahydrofolate dehydrogenase</fullName>
            <ecNumber evidence="1">1.5.1.5</ecNumber>
        </recommendedName>
    </domain>
    <domain>
        <recommendedName>
            <fullName evidence="1">Methenyltetrahydrofolate cyclohydrolase</fullName>
            <ecNumber evidence="1">3.5.4.9</ecNumber>
        </recommendedName>
    </domain>
</protein>
<sequence>MTAQILDGKATAAAIKSDLTARVAALKEKGVTPGLGTILVGDDPGSQKYVAGKHRDCAQVGIASIQRELPATATQEEIEAAVRELNEDPACTGYIVQLPLPKGIDENRILELMDPDKDADGLHPMNLGRLVLNEPAPLPCTPNGVLTLLRRYGVEIKGAEVVVVGRGVTIGRPMPLLLTRRSENATVTQCHTGTRDLSSHLKRADIIVAAAGSAHLIRPEDVKPGAAVLDVGVSRSAEGKIVGDVHPGVAEVAGWISPNPGGVGPMTRAQLLVNVVEAAERSVG</sequence>
<feature type="chain" id="PRO_0000268526" description="Bifunctional protein FolD 2">
    <location>
        <begin position="1"/>
        <end position="284"/>
    </location>
</feature>
<feature type="binding site" evidence="1">
    <location>
        <begin position="165"/>
        <end position="167"/>
    </location>
    <ligand>
        <name>NADP(+)</name>
        <dbReference type="ChEBI" id="CHEBI:58349"/>
    </ligand>
</feature>
<feature type="binding site" evidence="1">
    <location>
        <position position="192"/>
    </location>
    <ligand>
        <name>NADP(+)</name>
        <dbReference type="ChEBI" id="CHEBI:58349"/>
    </ligand>
</feature>
<feature type="binding site" evidence="1">
    <location>
        <position position="233"/>
    </location>
    <ligand>
        <name>NADP(+)</name>
        <dbReference type="ChEBI" id="CHEBI:58349"/>
    </ligand>
</feature>